<name>NQRC_NEIMB</name>
<protein>
    <recommendedName>
        <fullName evidence="1">Na(+)-translocating NADH-quinone reductase subunit C</fullName>
        <shortName evidence="1">Na(+)-NQR subunit C</shortName>
        <shortName evidence="1">Na(+)-translocating NQR subunit C</shortName>
        <ecNumber evidence="1">7.2.1.1</ecNumber>
    </recommendedName>
    <alternativeName>
        <fullName evidence="1">NQR complex subunit C</fullName>
    </alternativeName>
    <alternativeName>
        <fullName evidence="1">NQR-1 subunit C</fullName>
    </alternativeName>
</protein>
<dbReference type="EC" id="7.2.1.1" evidence="1"/>
<dbReference type="EMBL" id="AE002098">
    <property type="protein sequence ID" value="AAF40995.1"/>
    <property type="molecule type" value="Genomic_DNA"/>
</dbReference>
<dbReference type="PIR" id="B81185">
    <property type="entry name" value="B81185"/>
</dbReference>
<dbReference type="RefSeq" id="NP_273611.1">
    <property type="nucleotide sequence ID" value="NC_003112.2"/>
</dbReference>
<dbReference type="RefSeq" id="WP_002225563.1">
    <property type="nucleotide sequence ID" value="NC_003112.2"/>
</dbReference>
<dbReference type="SMR" id="Q9K0M5"/>
<dbReference type="STRING" id="122586.NMB0567"/>
<dbReference type="PaxDb" id="122586-NMB0567"/>
<dbReference type="KEGG" id="nme:NMB0567"/>
<dbReference type="PATRIC" id="fig|122586.8.peg.726"/>
<dbReference type="HOGENOM" id="CLU_077882_0_1_4"/>
<dbReference type="InParanoid" id="Q9K0M5"/>
<dbReference type="OrthoDB" id="9786835at2"/>
<dbReference type="Proteomes" id="UP000000425">
    <property type="component" value="Chromosome"/>
</dbReference>
<dbReference type="GO" id="GO:0005886">
    <property type="term" value="C:plasma membrane"/>
    <property type="evidence" value="ECO:0007669"/>
    <property type="project" value="UniProtKB-SubCell"/>
</dbReference>
<dbReference type="GO" id="GO:0010181">
    <property type="term" value="F:FMN binding"/>
    <property type="evidence" value="ECO:0007669"/>
    <property type="project" value="UniProtKB-UniRule"/>
</dbReference>
<dbReference type="GO" id="GO:0016655">
    <property type="term" value="F:oxidoreductase activity, acting on NAD(P)H, quinone or similar compound as acceptor"/>
    <property type="evidence" value="ECO:0007669"/>
    <property type="project" value="UniProtKB-UniRule"/>
</dbReference>
<dbReference type="GO" id="GO:0006814">
    <property type="term" value="P:sodium ion transport"/>
    <property type="evidence" value="ECO:0007669"/>
    <property type="project" value="UniProtKB-UniRule"/>
</dbReference>
<dbReference type="HAMAP" id="MF_00427">
    <property type="entry name" value="NqrC"/>
    <property type="match status" value="1"/>
</dbReference>
<dbReference type="InterPro" id="IPR007329">
    <property type="entry name" value="FMN-bd"/>
</dbReference>
<dbReference type="InterPro" id="IPR010204">
    <property type="entry name" value="NqrC"/>
</dbReference>
<dbReference type="NCBIfam" id="TIGR01938">
    <property type="entry name" value="nqrC"/>
    <property type="match status" value="1"/>
</dbReference>
<dbReference type="NCBIfam" id="NF003746">
    <property type="entry name" value="PRK05346.1-1"/>
    <property type="match status" value="1"/>
</dbReference>
<dbReference type="NCBIfam" id="NF003749">
    <property type="entry name" value="PRK05346.1-5"/>
    <property type="match status" value="1"/>
</dbReference>
<dbReference type="PANTHER" id="PTHR37838">
    <property type="entry name" value="NA(+)-TRANSLOCATING NADH-QUINONE REDUCTASE SUBUNIT C"/>
    <property type="match status" value="1"/>
</dbReference>
<dbReference type="PANTHER" id="PTHR37838:SF1">
    <property type="entry name" value="NA(+)-TRANSLOCATING NADH-QUINONE REDUCTASE SUBUNIT C"/>
    <property type="match status" value="1"/>
</dbReference>
<dbReference type="Pfam" id="PF04205">
    <property type="entry name" value="FMN_bind"/>
    <property type="match status" value="1"/>
</dbReference>
<dbReference type="PIRSF" id="PIRSF009437">
    <property type="entry name" value="NQR-1_subunit_C"/>
    <property type="match status" value="1"/>
</dbReference>
<dbReference type="SMART" id="SM00900">
    <property type="entry name" value="FMN_bind"/>
    <property type="match status" value="1"/>
</dbReference>
<comment type="function">
    <text evidence="1">NQR complex catalyzes the reduction of ubiquinone-1 to ubiquinol by two successive reactions, coupled with the transport of Na(+) ions from the cytoplasm to the periplasm. NqrA to NqrE are probably involved in the second step, the conversion of ubisemiquinone to ubiquinol.</text>
</comment>
<comment type="catalytic activity">
    <reaction evidence="1">
        <text>a ubiquinone + n Na(+)(in) + NADH + H(+) = a ubiquinol + n Na(+)(out) + NAD(+)</text>
        <dbReference type="Rhea" id="RHEA:47748"/>
        <dbReference type="Rhea" id="RHEA-COMP:9565"/>
        <dbReference type="Rhea" id="RHEA-COMP:9566"/>
        <dbReference type="ChEBI" id="CHEBI:15378"/>
        <dbReference type="ChEBI" id="CHEBI:16389"/>
        <dbReference type="ChEBI" id="CHEBI:17976"/>
        <dbReference type="ChEBI" id="CHEBI:29101"/>
        <dbReference type="ChEBI" id="CHEBI:57540"/>
        <dbReference type="ChEBI" id="CHEBI:57945"/>
        <dbReference type="EC" id="7.2.1.1"/>
    </reaction>
</comment>
<comment type="cofactor">
    <cofactor evidence="1">
        <name>FMN</name>
        <dbReference type="ChEBI" id="CHEBI:58210"/>
    </cofactor>
</comment>
<comment type="subunit">
    <text evidence="1">Composed of six subunits; NqrA, NqrB, NqrC, NqrD, NqrE and NqrF.</text>
</comment>
<comment type="subcellular location">
    <subcellularLocation>
        <location evidence="1">Cell inner membrane</location>
        <topology evidence="1">Single-pass membrane protein</topology>
    </subcellularLocation>
</comment>
<comment type="similarity">
    <text evidence="1">Belongs to the NqrC family.</text>
</comment>
<comment type="caution">
    <text evidence="1 2">The residue potentially involved in the covalent binding of FMN is a Ser instead of a Thr.</text>
</comment>
<feature type="chain" id="PRO_0000214218" description="Na(+)-translocating NADH-quinone reductase subunit C">
    <location>
        <begin position="1"/>
        <end position="258"/>
    </location>
</feature>
<feature type="transmembrane region" description="Helical" evidence="1">
    <location>
        <begin position="14"/>
        <end position="34"/>
    </location>
</feature>
<feature type="modified residue" description="FMN phosphoryl serine" evidence="1">
    <location>
        <position position="226"/>
    </location>
</feature>
<gene>
    <name evidence="1" type="primary">nqrC</name>
    <name type="ordered locus">NMB0567</name>
</gene>
<reference key="1">
    <citation type="journal article" date="2000" name="Science">
        <title>Complete genome sequence of Neisseria meningitidis serogroup B strain MC58.</title>
        <authorList>
            <person name="Tettelin H."/>
            <person name="Saunders N.J."/>
            <person name="Heidelberg J.F."/>
            <person name="Jeffries A.C."/>
            <person name="Nelson K.E."/>
            <person name="Eisen J.A."/>
            <person name="Ketchum K.A."/>
            <person name="Hood D.W."/>
            <person name="Peden J.F."/>
            <person name="Dodson R.J."/>
            <person name="Nelson W.C."/>
            <person name="Gwinn M.L."/>
            <person name="DeBoy R.T."/>
            <person name="Peterson J.D."/>
            <person name="Hickey E.K."/>
            <person name="Haft D.H."/>
            <person name="Salzberg S.L."/>
            <person name="White O."/>
            <person name="Fleischmann R.D."/>
            <person name="Dougherty B.A."/>
            <person name="Mason T.M."/>
            <person name="Ciecko A."/>
            <person name="Parksey D.S."/>
            <person name="Blair E."/>
            <person name="Cittone H."/>
            <person name="Clark E.B."/>
            <person name="Cotton M.D."/>
            <person name="Utterback T.R."/>
            <person name="Khouri H.M."/>
            <person name="Qin H."/>
            <person name="Vamathevan J.J."/>
            <person name="Gill J."/>
            <person name="Scarlato V."/>
            <person name="Masignani V."/>
            <person name="Pizza M."/>
            <person name="Grandi G."/>
            <person name="Sun L."/>
            <person name="Smith H.O."/>
            <person name="Fraser C.M."/>
            <person name="Moxon E.R."/>
            <person name="Rappuoli R."/>
            <person name="Venter J.C."/>
        </authorList>
    </citation>
    <scope>NUCLEOTIDE SEQUENCE [LARGE SCALE GENOMIC DNA]</scope>
    <source>
        <strain>ATCC BAA-335 / MC58</strain>
    </source>
</reference>
<sequence length="258" mass="27607">MAKKFDKDSFSGTLIVVLAVSLICSVIVAGAVVGLKPIQEKQKLQDKQGYILSVAGLMDKDTDIGKTFAERIEQRVVDLATGEYVADAPKDFSARIAGKDPAQSIRIKTEDDLAGIKSRAKYTEVYLVKGEDGKIGQIILPMHGNGLWSVMYGFVAIQPDGNTINGITYYEQGETPGLGGEIGNPLWQQKFVGKKLFDGQGKLALHVGKGAGSDKEHGVDALSGASLTSKGVQGSFAYWFGENGYIPYLNKLKSAGAQ</sequence>
<evidence type="ECO:0000255" key="1">
    <source>
        <dbReference type="HAMAP-Rule" id="MF_00427"/>
    </source>
</evidence>
<evidence type="ECO:0000305" key="2"/>
<keyword id="KW-0997">Cell inner membrane</keyword>
<keyword id="KW-1003">Cell membrane</keyword>
<keyword id="KW-0285">Flavoprotein</keyword>
<keyword id="KW-0288">FMN</keyword>
<keyword id="KW-0406">Ion transport</keyword>
<keyword id="KW-0472">Membrane</keyword>
<keyword id="KW-0520">NAD</keyword>
<keyword id="KW-0597">Phosphoprotein</keyword>
<keyword id="KW-1185">Reference proteome</keyword>
<keyword id="KW-0915">Sodium</keyword>
<keyword id="KW-0739">Sodium transport</keyword>
<keyword id="KW-1278">Translocase</keyword>
<keyword id="KW-0812">Transmembrane</keyword>
<keyword id="KW-1133">Transmembrane helix</keyword>
<keyword id="KW-0813">Transport</keyword>
<keyword id="KW-0830">Ubiquinone</keyword>
<proteinExistence type="inferred from homology"/>
<organism>
    <name type="scientific">Neisseria meningitidis serogroup B (strain ATCC BAA-335 / MC58)</name>
    <dbReference type="NCBI Taxonomy" id="122586"/>
    <lineage>
        <taxon>Bacteria</taxon>
        <taxon>Pseudomonadati</taxon>
        <taxon>Pseudomonadota</taxon>
        <taxon>Betaproteobacteria</taxon>
        <taxon>Neisseriales</taxon>
        <taxon>Neisseriaceae</taxon>
        <taxon>Neisseria</taxon>
    </lineage>
</organism>
<accession>Q9K0M5</accession>